<keyword id="KW-0472">Membrane</keyword>
<keyword id="KW-0534">Nitrate assimilation</keyword>
<keyword id="KW-1185">Reference proteome</keyword>
<keyword id="KW-0812">Transmembrane</keyword>
<keyword id="KW-1133">Transmembrane helix</keyword>
<keyword id="KW-0813">Transport</keyword>
<evidence type="ECO:0000250" key="1"/>
<evidence type="ECO:0000255" key="2"/>
<evidence type="ECO:0000256" key="3">
    <source>
        <dbReference type="SAM" id="MobiDB-lite"/>
    </source>
</evidence>
<evidence type="ECO:0000269" key="4">
    <source>
    </source>
</evidence>
<evidence type="ECO:0000269" key="5">
    <source>
    </source>
</evidence>
<evidence type="ECO:0000305" key="6"/>
<organism>
    <name type="scientific">Arabidopsis thaliana</name>
    <name type="common">Mouse-ear cress</name>
    <dbReference type="NCBI Taxonomy" id="3702"/>
    <lineage>
        <taxon>Eukaryota</taxon>
        <taxon>Viridiplantae</taxon>
        <taxon>Streptophyta</taxon>
        <taxon>Embryophyta</taxon>
        <taxon>Tracheophyta</taxon>
        <taxon>Spermatophyta</taxon>
        <taxon>Magnoliopsida</taxon>
        <taxon>eudicotyledons</taxon>
        <taxon>Gunneridae</taxon>
        <taxon>Pentapetalae</taxon>
        <taxon>rosids</taxon>
        <taxon>malvids</taxon>
        <taxon>Brassicales</taxon>
        <taxon>Brassicaceae</taxon>
        <taxon>Camelineae</taxon>
        <taxon>Arabidopsis</taxon>
    </lineage>
</organism>
<accession>Q9M172</accession>
<accession>F4J6Q7</accession>
<protein>
    <recommendedName>
        <fullName>Protein NRT1/ PTR FAMILY 2.5</fullName>
        <shortName>AtNPF2.5</shortName>
    </recommendedName>
    <alternativeName>
        <fullName>Probable nitrate excretion transporter 6</fullName>
    </alternativeName>
    <alternativeName>
        <fullName>Protein NAXT1-like 5</fullName>
    </alternativeName>
</protein>
<proteinExistence type="evidence at transcript level"/>
<reference key="1">
    <citation type="journal article" date="2000" name="Nature">
        <title>Sequence and analysis of chromosome 3 of the plant Arabidopsis thaliana.</title>
        <authorList>
            <person name="Salanoubat M."/>
            <person name="Lemcke K."/>
            <person name="Rieger M."/>
            <person name="Ansorge W."/>
            <person name="Unseld M."/>
            <person name="Fartmann B."/>
            <person name="Valle G."/>
            <person name="Bloecker H."/>
            <person name="Perez-Alonso M."/>
            <person name="Obermaier B."/>
            <person name="Delseny M."/>
            <person name="Boutry M."/>
            <person name="Grivell L.A."/>
            <person name="Mache R."/>
            <person name="Puigdomenech P."/>
            <person name="De Simone V."/>
            <person name="Choisne N."/>
            <person name="Artiguenave F."/>
            <person name="Robert C."/>
            <person name="Brottier P."/>
            <person name="Wincker P."/>
            <person name="Cattolico L."/>
            <person name="Weissenbach J."/>
            <person name="Saurin W."/>
            <person name="Quetier F."/>
            <person name="Schaefer M."/>
            <person name="Mueller-Auer S."/>
            <person name="Gabel C."/>
            <person name="Fuchs M."/>
            <person name="Benes V."/>
            <person name="Wurmbach E."/>
            <person name="Drzonek H."/>
            <person name="Erfle H."/>
            <person name="Jordan N."/>
            <person name="Bangert S."/>
            <person name="Wiedelmann R."/>
            <person name="Kranz H."/>
            <person name="Voss H."/>
            <person name="Holland R."/>
            <person name="Brandt P."/>
            <person name="Nyakatura G."/>
            <person name="Vezzi A."/>
            <person name="D'Angelo M."/>
            <person name="Pallavicini A."/>
            <person name="Toppo S."/>
            <person name="Simionati B."/>
            <person name="Conrad A."/>
            <person name="Hornischer K."/>
            <person name="Kauer G."/>
            <person name="Loehnert T.-H."/>
            <person name="Nordsiek G."/>
            <person name="Reichelt J."/>
            <person name="Scharfe M."/>
            <person name="Schoen O."/>
            <person name="Bargues M."/>
            <person name="Terol J."/>
            <person name="Climent J."/>
            <person name="Navarro P."/>
            <person name="Collado C."/>
            <person name="Perez-Perez A."/>
            <person name="Ottenwaelder B."/>
            <person name="Duchemin D."/>
            <person name="Cooke R."/>
            <person name="Laudie M."/>
            <person name="Berger-Llauro C."/>
            <person name="Purnelle B."/>
            <person name="Masuy D."/>
            <person name="de Haan M."/>
            <person name="Maarse A.C."/>
            <person name="Alcaraz J.-P."/>
            <person name="Cottet A."/>
            <person name="Casacuberta E."/>
            <person name="Monfort A."/>
            <person name="Argiriou A."/>
            <person name="Flores M."/>
            <person name="Liguori R."/>
            <person name="Vitale D."/>
            <person name="Mannhaupt G."/>
            <person name="Haase D."/>
            <person name="Schoof H."/>
            <person name="Rudd S."/>
            <person name="Zaccaria P."/>
            <person name="Mewes H.-W."/>
            <person name="Mayer K.F.X."/>
            <person name="Kaul S."/>
            <person name="Town C.D."/>
            <person name="Koo H.L."/>
            <person name="Tallon L.J."/>
            <person name="Jenkins J."/>
            <person name="Rooney T."/>
            <person name="Rizzo M."/>
            <person name="Walts A."/>
            <person name="Utterback T."/>
            <person name="Fujii C.Y."/>
            <person name="Shea T.P."/>
            <person name="Creasy T.H."/>
            <person name="Haas B."/>
            <person name="Maiti R."/>
            <person name="Wu D."/>
            <person name="Peterson J."/>
            <person name="Van Aken S."/>
            <person name="Pai G."/>
            <person name="Militscher J."/>
            <person name="Sellers P."/>
            <person name="Gill J.E."/>
            <person name="Feldblyum T.V."/>
            <person name="Preuss D."/>
            <person name="Lin X."/>
            <person name="Nierman W.C."/>
            <person name="Salzberg S.L."/>
            <person name="White O."/>
            <person name="Venter J.C."/>
            <person name="Fraser C.M."/>
            <person name="Kaneko T."/>
            <person name="Nakamura Y."/>
            <person name="Sato S."/>
            <person name="Kato T."/>
            <person name="Asamizu E."/>
            <person name="Sasamoto S."/>
            <person name="Kimura T."/>
            <person name="Idesawa K."/>
            <person name="Kawashima K."/>
            <person name="Kishida Y."/>
            <person name="Kiyokawa C."/>
            <person name="Kohara M."/>
            <person name="Matsumoto M."/>
            <person name="Matsuno A."/>
            <person name="Muraki A."/>
            <person name="Nakayama S."/>
            <person name="Nakazaki N."/>
            <person name="Shinpo S."/>
            <person name="Takeuchi C."/>
            <person name="Wada T."/>
            <person name="Watanabe A."/>
            <person name="Yamada M."/>
            <person name="Yasuda M."/>
            <person name="Tabata S."/>
        </authorList>
    </citation>
    <scope>NUCLEOTIDE SEQUENCE [LARGE SCALE GENOMIC DNA]</scope>
    <source>
        <strain>cv. Columbia</strain>
    </source>
</reference>
<reference key="2">
    <citation type="journal article" date="2017" name="Plant J.">
        <title>Araport11: a complete reannotation of the Arabidopsis thaliana reference genome.</title>
        <authorList>
            <person name="Cheng C.Y."/>
            <person name="Krishnakumar V."/>
            <person name="Chan A.P."/>
            <person name="Thibaud-Nissen F."/>
            <person name="Schobel S."/>
            <person name="Town C.D."/>
        </authorList>
    </citation>
    <scope>GENOME REANNOTATION</scope>
    <source>
        <strain>cv. Columbia</strain>
    </source>
</reference>
<reference key="3">
    <citation type="journal article" date="2007" name="FEBS Lett.">
        <title>Nitrate transporters and peptide transporters.</title>
        <authorList>
            <person name="Tsay Y.F."/>
            <person name="Chiu C.C."/>
            <person name="Tsai C.B."/>
            <person name="Ho C.H."/>
            <person name="Hsu P.K."/>
        </authorList>
    </citation>
    <scope>TISSUE SPECIFICITY</scope>
    <scope>GENE FAMILY</scope>
</reference>
<reference key="4">
    <citation type="journal article" date="2007" name="Plant Cell">
        <title>Nitrate efflux at the root plasma membrane: identification of an Arabidopsis excretion transporter.</title>
        <authorList>
            <person name="Segonzac C."/>
            <person name="Boyer J.C."/>
            <person name="Ipotesi E."/>
            <person name="Szponarski W."/>
            <person name="Tillard P."/>
            <person name="Touraine B."/>
            <person name="Sommerer N."/>
            <person name="Rossignol M."/>
            <person name="Gibrat R."/>
        </authorList>
    </citation>
    <scope>IDENTIFICATION</scope>
    <scope>TISSUE SPECIFICITY</scope>
</reference>
<reference key="5">
    <citation type="journal article" date="2010" name="Plant Cell">
        <title>The Arabidopsis nitrate transporter NRT1.8 functions in nitrate removal from the xylem sap and mediates cadmium tolerance.</title>
        <authorList>
            <person name="Li J.Y."/>
            <person name="Fu Y.L."/>
            <person name="Pike S.M."/>
            <person name="Bao J."/>
            <person name="Tian W."/>
            <person name="Zhang Y."/>
            <person name="Chen C.Z."/>
            <person name="Zhang Y."/>
            <person name="Li H.M."/>
            <person name="Huang J."/>
            <person name="Li L.G."/>
            <person name="Schroeder J.I."/>
            <person name="Gassmann W."/>
            <person name="Gong J.M."/>
        </authorList>
    </citation>
    <scope>GENE FAMILY</scope>
</reference>
<reference key="6">
    <citation type="journal article" date="2014" name="Trends Plant Sci.">
        <title>A unified nomenclature of NITRATE TRANSPORTER 1/PEPTIDE TRANSPORTER family members in plants.</title>
        <authorList>
            <person name="Leran S."/>
            <person name="Varala K."/>
            <person name="Boyer J.C."/>
            <person name="Chiurazzi M."/>
            <person name="Crawford N."/>
            <person name="Daniel-Vedele F."/>
            <person name="David L."/>
            <person name="Dickstein R."/>
            <person name="Fernandez E."/>
            <person name="Forde B."/>
            <person name="Gassmann W."/>
            <person name="Geiger D."/>
            <person name="Gojon A."/>
            <person name="Gong J.M."/>
            <person name="Halkier B.A."/>
            <person name="Harris J.M."/>
            <person name="Hedrich R."/>
            <person name="Limami A.M."/>
            <person name="Rentsch D."/>
            <person name="Seo M."/>
            <person name="Tsay Y.F."/>
            <person name="Zhang M."/>
            <person name="Coruzzi G."/>
            <person name="Lacombe B."/>
        </authorList>
    </citation>
    <scope>GENE FAMILY</scope>
    <scope>NOMENCLATURE</scope>
</reference>
<name>PTR42_ARATH</name>
<feature type="chain" id="PRO_0000399976" description="Protein NRT1/ PTR FAMILY 2.5">
    <location>
        <begin position="1"/>
        <end position="560"/>
    </location>
</feature>
<feature type="transmembrane region" description="Helical" evidence="2">
    <location>
        <begin position="34"/>
        <end position="54"/>
    </location>
</feature>
<feature type="transmembrane region" description="Helical" evidence="2">
    <location>
        <begin position="77"/>
        <end position="97"/>
    </location>
</feature>
<feature type="transmembrane region" description="Helical" evidence="2">
    <location>
        <begin position="101"/>
        <end position="121"/>
    </location>
</feature>
<feature type="transmembrane region" description="Helical" evidence="2">
    <location>
        <begin position="141"/>
        <end position="161"/>
    </location>
</feature>
<feature type="transmembrane region" description="Helical" evidence="2">
    <location>
        <begin position="177"/>
        <end position="197"/>
    </location>
</feature>
<feature type="transmembrane region" description="Helical" evidence="2">
    <location>
        <begin position="207"/>
        <end position="227"/>
    </location>
</feature>
<feature type="transmembrane region" description="Helical" evidence="2">
    <location>
        <begin position="323"/>
        <end position="343"/>
    </location>
</feature>
<feature type="transmembrane region" description="Helical" evidence="2">
    <location>
        <begin position="372"/>
        <end position="392"/>
    </location>
</feature>
<feature type="transmembrane region" description="Helical" evidence="2">
    <location>
        <begin position="404"/>
        <end position="424"/>
    </location>
</feature>
<feature type="transmembrane region" description="Helical" evidence="2">
    <location>
        <begin position="441"/>
        <end position="461"/>
    </location>
</feature>
<feature type="transmembrane region" description="Helical" evidence="2">
    <location>
        <begin position="480"/>
        <end position="500"/>
    </location>
</feature>
<feature type="transmembrane region" description="Helical" evidence="2">
    <location>
        <begin position="520"/>
        <end position="540"/>
    </location>
</feature>
<feature type="region of interest" description="Disordered" evidence="3">
    <location>
        <begin position="1"/>
        <end position="20"/>
    </location>
</feature>
<dbReference type="EMBL" id="AL157735">
    <property type="protein sequence ID" value="CAB75784.1"/>
    <property type="status" value="ALT_SEQ"/>
    <property type="molecule type" value="Genomic_DNA"/>
</dbReference>
<dbReference type="EMBL" id="CP002686">
    <property type="protein sequence ID" value="AEE78062.1"/>
    <property type="molecule type" value="Genomic_DNA"/>
</dbReference>
<dbReference type="PIR" id="T47511">
    <property type="entry name" value="T47511"/>
</dbReference>
<dbReference type="RefSeq" id="NP_190157.2">
    <property type="nucleotide sequence ID" value="NM_114440.4"/>
</dbReference>
<dbReference type="SMR" id="Q9M172"/>
<dbReference type="FunCoup" id="Q9M172">
    <property type="interactions" value="6"/>
</dbReference>
<dbReference type="STRING" id="3702.Q9M172"/>
<dbReference type="iPTMnet" id="Q9M172"/>
<dbReference type="PaxDb" id="3702-AT3G45710.1"/>
<dbReference type="ProteomicsDB" id="224835"/>
<dbReference type="EnsemblPlants" id="AT3G45710.1">
    <property type="protein sequence ID" value="AT3G45710.1"/>
    <property type="gene ID" value="AT3G45710"/>
</dbReference>
<dbReference type="GeneID" id="823713"/>
<dbReference type="Gramene" id="AT3G45710.1">
    <property type="protein sequence ID" value="AT3G45710.1"/>
    <property type="gene ID" value="AT3G45710"/>
</dbReference>
<dbReference type="KEGG" id="ath:AT3G45710"/>
<dbReference type="Araport" id="AT3G45710"/>
<dbReference type="TAIR" id="AT3G45710">
    <property type="gene designation" value="NPF2.5"/>
</dbReference>
<dbReference type="eggNOG" id="KOG1237">
    <property type="taxonomic scope" value="Eukaryota"/>
</dbReference>
<dbReference type="HOGENOM" id="CLU_009313_4_2_1"/>
<dbReference type="InParanoid" id="Q9M172"/>
<dbReference type="OMA" id="FIMLNNW"/>
<dbReference type="PRO" id="PR:Q9M172"/>
<dbReference type="Proteomes" id="UP000006548">
    <property type="component" value="Chromosome 3"/>
</dbReference>
<dbReference type="ExpressionAtlas" id="Q9M172">
    <property type="expression patterns" value="baseline and differential"/>
</dbReference>
<dbReference type="GO" id="GO:0016020">
    <property type="term" value="C:membrane"/>
    <property type="evidence" value="ECO:0007669"/>
    <property type="project" value="UniProtKB-SubCell"/>
</dbReference>
<dbReference type="GO" id="GO:0015108">
    <property type="term" value="F:chloride transmembrane transporter activity"/>
    <property type="evidence" value="ECO:0000314"/>
    <property type="project" value="TAIR"/>
</dbReference>
<dbReference type="GO" id="GO:1902075">
    <property type="term" value="P:cellular response to salt"/>
    <property type="evidence" value="ECO:0000270"/>
    <property type="project" value="TAIR"/>
</dbReference>
<dbReference type="GO" id="GO:0006821">
    <property type="term" value="P:chloride transport"/>
    <property type="evidence" value="ECO:0000314"/>
    <property type="project" value="TAIR"/>
</dbReference>
<dbReference type="GO" id="GO:0042128">
    <property type="term" value="P:nitrate assimilation"/>
    <property type="evidence" value="ECO:0007669"/>
    <property type="project" value="UniProtKB-KW"/>
</dbReference>
<dbReference type="GO" id="GO:0006857">
    <property type="term" value="P:oligopeptide transport"/>
    <property type="evidence" value="ECO:0007669"/>
    <property type="project" value="InterPro"/>
</dbReference>
<dbReference type="CDD" id="cd17416">
    <property type="entry name" value="MFS_NPF1_2"/>
    <property type="match status" value="1"/>
</dbReference>
<dbReference type="Gene3D" id="1.20.1250.20">
    <property type="entry name" value="MFS general substrate transporter like domains"/>
    <property type="match status" value="1"/>
</dbReference>
<dbReference type="InterPro" id="IPR036259">
    <property type="entry name" value="MFS_trans_sf"/>
</dbReference>
<dbReference type="InterPro" id="IPR000109">
    <property type="entry name" value="POT_fam"/>
</dbReference>
<dbReference type="InterPro" id="IPR018456">
    <property type="entry name" value="PTR2_symporter_CS"/>
</dbReference>
<dbReference type="PANTHER" id="PTHR11654">
    <property type="entry name" value="OLIGOPEPTIDE TRANSPORTER-RELATED"/>
    <property type="match status" value="1"/>
</dbReference>
<dbReference type="Pfam" id="PF00854">
    <property type="entry name" value="PTR2"/>
    <property type="match status" value="1"/>
</dbReference>
<dbReference type="SUPFAM" id="SSF103473">
    <property type="entry name" value="MFS general substrate transporter"/>
    <property type="match status" value="1"/>
</dbReference>
<dbReference type="PROSITE" id="PS01022">
    <property type="entry name" value="PTR2_1"/>
    <property type="match status" value="1"/>
</dbReference>
<gene>
    <name type="primary">NPF2.5</name>
    <name type="ordered locus">At3g45710</name>
    <name type="ORF">T6D9.40</name>
</gene>
<comment type="function">
    <text evidence="1">Transporter involved in a passive nitrate efflux.</text>
</comment>
<comment type="subcellular location">
    <subcellularLocation>
        <location evidence="1">Membrane</location>
        <topology evidence="1">Multi-pass membrane protein</topology>
    </subcellularLocation>
</comment>
<comment type="tissue specificity">
    <text evidence="4 5">Expressed in the root epidermis or cortex.</text>
</comment>
<comment type="similarity">
    <text evidence="6">Belongs to the major facilitator superfamily. Proton-dependent oligopeptide transporter (POT/PTR) (TC 2.A.17) family.</text>
</comment>
<comment type="sequence caution" evidence="6">
    <conflict type="erroneous gene model prediction">
        <sequence resource="EMBL-CDS" id="CAB75784"/>
    </conflict>
</comment>
<sequence length="560" mass="61643">MADSKSGDTEVAHRSSDPSEKRGGWITLPFMLVTLLGMSITSFGWGMNLIVFLIEEFHIKNIAAAQISNVVNGVVNMLPVVAAILADSFFGNIPVISTSTFISLAGTSLLTLITSLNYLMPRPCETGSILCQSPSKLQLGILYVALALVIIGSAGTRFTLAAAGANQYKKPKEQGRFFNWFFLALYIGAITGTTAIVYTQDNASWKLGFGLCAVANLISFIVFIAGVRFYKHDKPLGSPYTSLIRVLVAATMKRKAVISSKDEDYHQYGLGKEAKTYTTMPSKSFRFLNRAALKNKEDLNTSGDSSNNMWRLCSVQEVEDFKAILRLVPLWAAVMFLSTPVAVQMSMTVLQALVMDRKLSPHFEVSAGSLQVIVLVFGCVFIMLNNWIIYPMYQKLIGKPLTPLQQVGIGHVFTILSMAISAVVEAKRLKTVENGGHPMSVLWLVPALVMVGIGEAFHFPANVAVFYGEFPESLKNTATSLTSVVIGISFYLSTAVIDVIQRTTSWLPNDINHGRVDNVYWVVVIGGVLNLGYFLVCSWFYKYRNLKDDDHEQDPKDVKT</sequence>